<feature type="chain" id="PRO_0000118654" description="NAD(P)H-quinone oxidoreductase subunit J, chloroplastic">
    <location>
        <begin position="1"/>
        <end position="158"/>
    </location>
</feature>
<proteinExistence type="inferred from homology"/>
<reference key="1">
    <citation type="journal article" date="1997" name="Plant Sci.">
        <title>Cloning and transcription analysis of the ndhC - ndhK - ndhJ genes of lupin plastid DNA.</title>
        <authorList>
            <person name="Oczkowski M."/>
            <person name="Paszkiewicz J.M."/>
            <person name="Piatyszek M."/>
            <person name="Augustyniak H."/>
        </authorList>
    </citation>
    <scope>NUCLEOTIDE SEQUENCE [GENOMIC DNA]</scope>
    <source>
        <strain>cv. Topaz</strain>
        <tissue>Leaf</tissue>
    </source>
</reference>
<dbReference type="EC" id="7.1.1.-" evidence="1"/>
<dbReference type="EMBL" id="U85664">
    <property type="protein sequence ID" value="AAB86904.1"/>
    <property type="molecule type" value="Genomic_DNA"/>
</dbReference>
<dbReference type="PIR" id="T09639">
    <property type="entry name" value="T09639"/>
</dbReference>
<dbReference type="SMR" id="P92309"/>
<dbReference type="GO" id="GO:0009535">
    <property type="term" value="C:chloroplast thylakoid membrane"/>
    <property type="evidence" value="ECO:0007669"/>
    <property type="project" value="UniProtKB-SubCell"/>
</dbReference>
<dbReference type="GO" id="GO:0008137">
    <property type="term" value="F:NADH dehydrogenase (ubiquinone) activity"/>
    <property type="evidence" value="ECO:0007669"/>
    <property type="project" value="InterPro"/>
</dbReference>
<dbReference type="GO" id="GO:0048038">
    <property type="term" value="F:quinone binding"/>
    <property type="evidence" value="ECO:0007669"/>
    <property type="project" value="UniProtKB-KW"/>
</dbReference>
<dbReference type="GO" id="GO:0019684">
    <property type="term" value="P:photosynthesis, light reaction"/>
    <property type="evidence" value="ECO:0007669"/>
    <property type="project" value="UniProtKB-UniRule"/>
</dbReference>
<dbReference type="Gene3D" id="3.30.460.80">
    <property type="entry name" value="NADH:ubiquinone oxidoreductase, 30kDa subunit"/>
    <property type="match status" value="1"/>
</dbReference>
<dbReference type="HAMAP" id="MF_01357">
    <property type="entry name" value="NDH1_NuoC"/>
    <property type="match status" value="1"/>
</dbReference>
<dbReference type="InterPro" id="IPR010218">
    <property type="entry name" value="NADH_DH_suC"/>
</dbReference>
<dbReference type="InterPro" id="IPR037232">
    <property type="entry name" value="NADH_quin_OxRdtase_su_C/D-like"/>
</dbReference>
<dbReference type="InterPro" id="IPR001268">
    <property type="entry name" value="NADH_UbQ_OxRdtase_30kDa_su"/>
</dbReference>
<dbReference type="InterPro" id="IPR020396">
    <property type="entry name" value="NADH_UbQ_OxRdtase_CS"/>
</dbReference>
<dbReference type="NCBIfam" id="NF009141">
    <property type="entry name" value="PRK12494.1"/>
    <property type="match status" value="1"/>
</dbReference>
<dbReference type="PANTHER" id="PTHR10884:SF14">
    <property type="entry name" value="NADH DEHYDROGENASE [UBIQUINONE] IRON-SULFUR PROTEIN 3, MITOCHONDRIAL"/>
    <property type="match status" value="1"/>
</dbReference>
<dbReference type="PANTHER" id="PTHR10884">
    <property type="entry name" value="NADH DEHYDROGENASE UBIQUINONE IRON-SULFUR PROTEIN 3"/>
    <property type="match status" value="1"/>
</dbReference>
<dbReference type="Pfam" id="PF00329">
    <property type="entry name" value="Complex1_30kDa"/>
    <property type="match status" value="1"/>
</dbReference>
<dbReference type="SUPFAM" id="SSF143243">
    <property type="entry name" value="Nqo5-like"/>
    <property type="match status" value="1"/>
</dbReference>
<dbReference type="PROSITE" id="PS00542">
    <property type="entry name" value="COMPLEX1_30K"/>
    <property type="match status" value="1"/>
</dbReference>
<name>NDHJ_LUPLU</name>
<accession>P92309</accession>
<gene>
    <name evidence="1" type="primary">ndhJ</name>
</gene>
<organism>
    <name type="scientific">Lupinus luteus</name>
    <name type="common">European yellow lupine</name>
    <dbReference type="NCBI Taxonomy" id="3873"/>
    <lineage>
        <taxon>Eukaryota</taxon>
        <taxon>Viridiplantae</taxon>
        <taxon>Streptophyta</taxon>
        <taxon>Embryophyta</taxon>
        <taxon>Tracheophyta</taxon>
        <taxon>Spermatophyta</taxon>
        <taxon>Magnoliopsida</taxon>
        <taxon>eudicotyledons</taxon>
        <taxon>Gunneridae</taxon>
        <taxon>Pentapetalae</taxon>
        <taxon>rosids</taxon>
        <taxon>fabids</taxon>
        <taxon>Fabales</taxon>
        <taxon>Fabaceae</taxon>
        <taxon>Papilionoideae</taxon>
        <taxon>50 kb inversion clade</taxon>
        <taxon>genistoids sensu lato</taxon>
        <taxon>core genistoids</taxon>
        <taxon>Genisteae</taxon>
        <taxon>Lupinus</taxon>
    </lineage>
</organism>
<sequence length="158" mass="18411">MQGRLSAWLVKHGLIHRSLGFDYQGIETLQIKPEAWHSIAVILYVYGYNYLRSQCAYDVAPGGLLASVYHLTRIECGIDQPEEVCIKVFVQGKILGIPSIFWVWKSADFQERESYDMLGISYYNHPRLKRILMPESWIGWPLRKDYIAPNFYEIQDAH</sequence>
<protein>
    <recommendedName>
        <fullName evidence="1">NAD(P)H-quinone oxidoreductase subunit J, chloroplastic</fullName>
        <ecNumber evidence="1">7.1.1.-</ecNumber>
    </recommendedName>
    <alternativeName>
        <fullName>NAD(P)H dehydrogenase subunit J</fullName>
    </alternativeName>
    <alternativeName>
        <fullName evidence="1">NADH-plastoquinone oxidoreductase subunit J</fullName>
    </alternativeName>
</protein>
<evidence type="ECO:0000255" key="1">
    <source>
        <dbReference type="HAMAP-Rule" id="MF_01357"/>
    </source>
</evidence>
<keyword id="KW-0150">Chloroplast</keyword>
<keyword id="KW-0472">Membrane</keyword>
<keyword id="KW-0520">NAD</keyword>
<keyword id="KW-0521">NADP</keyword>
<keyword id="KW-0934">Plastid</keyword>
<keyword id="KW-0618">Plastoquinone</keyword>
<keyword id="KW-0874">Quinone</keyword>
<keyword id="KW-0793">Thylakoid</keyword>
<keyword id="KW-1278">Translocase</keyword>
<keyword id="KW-0813">Transport</keyword>
<geneLocation type="chloroplast"/>
<comment type="function">
    <text evidence="1">NDH shuttles electrons from NAD(P)H:plastoquinone, via FMN and iron-sulfur (Fe-S) centers, to quinones in the photosynthetic chain and possibly in a chloroplast respiratory chain. The immediate electron acceptor for the enzyme in this species is believed to be plastoquinone. Couples the redox reaction to proton translocation, and thus conserves the redox energy in a proton gradient.</text>
</comment>
<comment type="catalytic activity">
    <reaction evidence="1">
        <text>a plastoquinone + NADH + (n+1) H(+)(in) = a plastoquinol + NAD(+) + n H(+)(out)</text>
        <dbReference type="Rhea" id="RHEA:42608"/>
        <dbReference type="Rhea" id="RHEA-COMP:9561"/>
        <dbReference type="Rhea" id="RHEA-COMP:9562"/>
        <dbReference type="ChEBI" id="CHEBI:15378"/>
        <dbReference type="ChEBI" id="CHEBI:17757"/>
        <dbReference type="ChEBI" id="CHEBI:57540"/>
        <dbReference type="ChEBI" id="CHEBI:57945"/>
        <dbReference type="ChEBI" id="CHEBI:62192"/>
    </reaction>
</comment>
<comment type="catalytic activity">
    <reaction evidence="1">
        <text>a plastoquinone + NADPH + (n+1) H(+)(in) = a plastoquinol + NADP(+) + n H(+)(out)</text>
        <dbReference type="Rhea" id="RHEA:42612"/>
        <dbReference type="Rhea" id="RHEA-COMP:9561"/>
        <dbReference type="Rhea" id="RHEA-COMP:9562"/>
        <dbReference type="ChEBI" id="CHEBI:15378"/>
        <dbReference type="ChEBI" id="CHEBI:17757"/>
        <dbReference type="ChEBI" id="CHEBI:57783"/>
        <dbReference type="ChEBI" id="CHEBI:58349"/>
        <dbReference type="ChEBI" id="CHEBI:62192"/>
    </reaction>
</comment>
<comment type="subunit">
    <text evidence="1">NDH is composed of at least 16 different subunits, 5 of which are encoded in the nucleus.</text>
</comment>
<comment type="subcellular location">
    <subcellularLocation>
        <location evidence="1">Plastid</location>
        <location evidence="1">Chloroplast thylakoid membrane</location>
        <topology evidence="1">Peripheral membrane protein</topology>
        <orientation evidence="1">Stromal side</orientation>
    </subcellularLocation>
</comment>
<comment type="similarity">
    <text evidence="1">Belongs to the complex I 30 kDa subunit family.</text>
</comment>